<feature type="chain" id="PRO_0000205403" description="cAMP-dependent protein kinase regulatory subunit">
    <location>
        <begin position="1"/>
        <end position="389"/>
    </location>
</feature>
<feature type="region of interest" description="Dimerization and phosphorylation" evidence="2">
    <location>
        <begin position="1"/>
        <end position="128"/>
    </location>
</feature>
<feature type="region of interest" description="Disordered" evidence="3">
    <location>
        <begin position="1"/>
        <end position="57"/>
    </location>
</feature>
<feature type="region of interest" description="Disordered" evidence="3">
    <location>
        <begin position="87"/>
        <end position="110"/>
    </location>
</feature>
<feature type="compositionally biased region" description="Polar residues" evidence="3">
    <location>
        <begin position="21"/>
        <end position="31"/>
    </location>
</feature>
<feature type="compositionally biased region" description="Basic and acidic residues" evidence="3">
    <location>
        <begin position="34"/>
        <end position="43"/>
    </location>
</feature>
<feature type="compositionally biased region" description="Polar residues" evidence="3">
    <location>
        <begin position="87"/>
        <end position="105"/>
    </location>
</feature>
<feature type="binding site">
    <location>
        <begin position="129"/>
        <end position="258"/>
    </location>
    <ligand>
        <name>3',5'-cyclic AMP</name>
        <dbReference type="ChEBI" id="CHEBI:58165"/>
        <label>1</label>
    </ligand>
</feature>
<feature type="binding site" evidence="1">
    <location>
        <position position="207"/>
    </location>
    <ligand>
        <name>3',5'-cyclic AMP</name>
        <dbReference type="ChEBI" id="CHEBI:58165"/>
        <label>1</label>
    </ligand>
</feature>
<feature type="binding site" evidence="1">
    <location>
        <position position="216"/>
    </location>
    <ligand>
        <name>3',5'-cyclic AMP</name>
        <dbReference type="ChEBI" id="CHEBI:58165"/>
        <label>1</label>
    </ligand>
</feature>
<feature type="binding site">
    <location>
        <begin position="261"/>
        <end position="377"/>
    </location>
    <ligand>
        <name>3',5'-cyclic AMP</name>
        <dbReference type="ChEBI" id="CHEBI:58165"/>
        <label>2</label>
    </ligand>
</feature>
<feature type="binding site" evidence="1">
    <location>
        <position position="327"/>
    </location>
    <ligand>
        <name>3',5'-cyclic AMP</name>
        <dbReference type="ChEBI" id="CHEBI:58165"/>
        <label>2</label>
    </ligand>
</feature>
<feature type="binding site" evidence="1">
    <location>
        <position position="336"/>
    </location>
    <ligand>
        <name>3',5'-cyclic AMP</name>
        <dbReference type="ChEBI" id="CHEBI:58165"/>
        <label>2</label>
    </ligand>
</feature>
<feature type="modified residue" description="Phosphoserine" evidence="1">
    <location>
        <position position="87"/>
    </location>
</feature>
<organism>
    <name type="scientific">Blumeria graminis</name>
    <name type="common">Powdery mildew</name>
    <name type="synonym">Oidium monilioides</name>
    <dbReference type="NCBI Taxonomy" id="34373"/>
    <lineage>
        <taxon>Eukaryota</taxon>
        <taxon>Fungi</taxon>
        <taxon>Dikarya</taxon>
        <taxon>Ascomycota</taxon>
        <taxon>Pezizomycotina</taxon>
        <taxon>Leotiomycetes</taxon>
        <taxon>Erysiphales</taxon>
        <taxon>Erysiphaceae</taxon>
        <taxon>Blumeria</taxon>
    </lineage>
</organism>
<reference key="1">
    <citation type="thesis" date="2001" institute="University of Copenhagen" country="Denmark">
        <authorList>
            <person name="Bindslev L."/>
        </authorList>
    </citation>
    <scope>NUCLEOTIDE SEQUENCE [GENOMIC DNA]</scope>
</reference>
<accession>Q9HEP7</accession>
<comment type="subunit">
    <text evidence="1">Tetramer, composed of 2 regulatory (R) and 2 catalytic (C) subunits. In the presence of cAMP it dissociates into 2 active monomeric C subunits and an R dimer (By similarity).</text>
</comment>
<comment type="similarity">
    <text evidence="4">Belongs to the cAMP-dependent kinase regulatory chain family.</text>
</comment>
<protein>
    <recommendedName>
        <fullName>cAMP-dependent protein kinase regulatory subunit</fullName>
        <shortName>PKA regulatory subunit</shortName>
    </recommendedName>
</protein>
<sequence>MSENTFPGRLGINPFGPESRAANTEKPSTSHIVRVTERDEDKVNPTFNNKPLKKFAGDRATNTPLQAFKLGASDGFPEHYGMGRRTSVSAESLNPNPTASSNESWTPPYHRKTPEQLERLKKSISGNFLFNHLDDEQSAQVLGALVEKPIPVKDIKVISQGDQGDFFYVVEKGSFDVYVNPAGSVQPGLGGLGNKVATIEPGGSFGELALMYNAPRAATVISAEGSCTLWSLDRITFRRILMDSTFKCRRLYESFLEEVTLLSTLTKYERSKIADALVTLKYPAGTTIKEGDVGEEFYLLESGEAEAFKAGCQNAVKCYSKGDYFGELALLNDAPRAASVVSKTEVKVAKLGKDGFQRLLGPVESIMRRTKYEGVEEIDREFPGSAAAL</sequence>
<evidence type="ECO:0000250" key="1"/>
<evidence type="ECO:0000255" key="2"/>
<evidence type="ECO:0000256" key="3">
    <source>
        <dbReference type="SAM" id="MobiDB-lite"/>
    </source>
</evidence>
<evidence type="ECO:0000305" key="4"/>
<dbReference type="EMBL" id="AJ304829">
    <property type="protein sequence ID" value="CAC19660.1"/>
    <property type="molecule type" value="Genomic_DNA"/>
</dbReference>
<dbReference type="SMR" id="Q9HEP7"/>
<dbReference type="VEuPathDB" id="FungiDB:BGT96224V316_LOCUS2241"/>
<dbReference type="VEuPathDB" id="FungiDB:BGTH12_LOCUS2073"/>
<dbReference type="GO" id="GO:0005952">
    <property type="term" value="C:cAMP-dependent protein kinase complex"/>
    <property type="evidence" value="ECO:0007669"/>
    <property type="project" value="InterPro"/>
</dbReference>
<dbReference type="GO" id="GO:0005829">
    <property type="term" value="C:cytosol"/>
    <property type="evidence" value="ECO:0007669"/>
    <property type="project" value="TreeGrafter"/>
</dbReference>
<dbReference type="GO" id="GO:0005634">
    <property type="term" value="C:nucleus"/>
    <property type="evidence" value="ECO:0007669"/>
    <property type="project" value="TreeGrafter"/>
</dbReference>
<dbReference type="GO" id="GO:0030552">
    <property type="term" value="F:cAMP binding"/>
    <property type="evidence" value="ECO:0007669"/>
    <property type="project" value="UniProtKB-KW"/>
</dbReference>
<dbReference type="GO" id="GO:0004862">
    <property type="term" value="F:cAMP-dependent protein kinase inhibitor activity"/>
    <property type="evidence" value="ECO:0007669"/>
    <property type="project" value="TreeGrafter"/>
</dbReference>
<dbReference type="GO" id="GO:0034236">
    <property type="term" value="F:protein kinase A catalytic subunit binding"/>
    <property type="evidence" value="ECO:0007669"/>
    <property type="project" value="TreeGrafter"/>
</dbReference>
<dbReference type="CDD" id="cd00038">
    <property type="entry name" value="CAP_ED"/>
    <property type="match status" value="2"/>
</dbReference>
<dbReference type="FunFam" id="2.60.120.10:FF:000039">
    <property type="entry name" value="cAMP-dependent protein kinase regulatory subunit"/>
    <property type="match status" value="1"/>
</dbReference>
<dbReference type="Gene3D" id="2.60.120.10">
    <property type="entry name" value="Jelly Rolls"/>
    <property type="match status" value="2"/>
</dbReference>
<dbReference type="InterPro" id="IPR050503">
    <property type="entry name" value="cAMP-dep_PK_reg_su-like"/>
</dbReference>
<dbReference type="InterPro" id="IPR012198">
    <property type="entry name" value="cAMP_dep_PK_reg_su"/>
</dbReference>
<dbReference type="InterPro" id="IPR018488">
    <property type="entry name" value="cNMP-bd_CS"/>
</dbReference>
<dbReference type="InterPro" id="IPR000595">
    <property type="entry name" value="cNMP-bd_dom"/>
</dbReference>
<dbReference type="InterPro" id="IPR018490">
    <property type="entry name" value="cNMP-bd_dom_sf"/>
</dbReference>
<dbReference type="InterPro" id="IPR014710">
    <property type="entry name" value="RmlC-like_jellyroll"/>
</dbReference>
<dbReference type="PANTHER" id="PTHR11635">
    <property type="entry name" value="CAMP-DEPENDENT PROTEIN KINASE REGULATORY CHAIN"/>
    <property type="match status" value="1"/>
</dbReference>
<dbReference type="PANTHER" id="PTHR11635:SF152">
    <property type="entry name" value="CAMP-DEPENDENT PROTEIN KINASE TYPE I REGULATORY SUBUNIT-RELATED"/>
    <property type="match status" value="1"/>
</dbReference>
<dbReference type="Pfam" id="PF00027">
    <property type="entry name" value="cNMP_binding"/>
    <property type="match status" value="2"/>
</dbReference>
<dbReference type="PIRSF" id="PIRSF000548">
    <property type="entry name" value="PK_regulatory"/>
    <property type="match status" value="1"/>
</dbReference>
<dbReference type="PRINTS" id="PR00103">
    <property type="entry name" value="CAMPKINASE"/>
</dbReference>
<dbReference type="SMART" id="SM00100">
    <property type="entry name" value="cNMP"/>
    <property type="match status" value="2"/>
</dbReference>
<dbReference type="SUPFAM" id="SSF51206">
    <property type="entry name" value="cAMP-binding domain-like"/>
    <property type="match status" value="2"/>
</dbReference>
<dbReference type="PROSITE" id="PS00888">
    <property type="entry name" value="CNMP_BINDING_1"/>
    <property type="match status" value="1"/>
</dbReference>
<dbReference type="PROSITE" id="PS00889">
    <property type="entry name" value="CNMP_BINDING_2"/>
    <property type="match status" value="2"/>
</dbReference>
<dbReference type="PROSITE" id="PS50042">
    <property type="entry name" value="CNMP_BINDING_3"/>
    <property type="match status" value="2"/>
</dbReference>
<keyword id="KW-0114">cAMP</keyword>
<keyword id="KW-0116">cAMP-binding</keyword>
<keyword id="KW-0547">Nucleotide-binding</keyword>
<keyword id="KW-0597">Phosphoprotein</keyword>
<keyword id="KW-0677">Repeat</keyword>
<name>KAPR_BLUGR</name>
<proteinExistence type="inferred from homology"/>
<gene>
    <name type="primary">pkar</name>
    <name type="synonym">bkr1</name>
</gene>